<name>HBB_PAPCY</name>
<organism>
    <name type="scientific">Papio cynocephalus</name>
    <name type="common">Yellow baboon</name>
    <dbReference type="NCBI Taxonomy" id="9556"/>
    <lineage>
        <taxon>Eukaryota</taxon>
        <taxon>Metazoa</taxon>
        <taxon>Chordata</taxon>
        <taxon>Craniata</taxon>
        <taxon>Vertebrata</taxon>
        <taxon>Euteleostomi</taxon>
        <taxon>Mammalia</taxon>
        <taxon>Eutheria</taxon>
        <taxon>Euarchontoglires</taxon>
        <taxon>Primates</taxon>
        <taxon>Haplorrhini</taxon>
        <taxon>Catarrhini</taxon>
        <taxon>Cercopithecidae</taxon>
        <taxon>Cercopithecinae</taxon>
        <taxon>Papio</taxon>
    </lineage>
</organism>
<gene>
    <name type="primary">HBB</name>
</gene>
<sequence>VHLTPEEKNAVTALWGKVNVDEVGGEALGRLLVVYPWTQRFFDSFGDLSSPAAVMGNPKVKAHGKKVLGAFSDGLNHLDNLKGTFAQLSELHCDKLHVDPENFKLLGNVLVCVLAHHFGKEFTPQVQAAYQKVVAGVANALAHKYH</sequence>
<keyword id="KW-0007">Acetylation</keyword>
<keyword id="KW-0903">Direct protein sequencing</keyword>
<keyword id="KW-0349">Heme</keyword>
<keyword id="KW-0408">Iron</keyword>
<keyword id="KW-0479">Metal-binding</keyword>
<keyword id="KW-0561">Oxygen transport</keyword>
<keyword id="KW-0597">Phosphoprotein</keyword>
<keyword id="KW-0702">S-nitrosylation</keyword>
<keyword id="KW-0813">Transport</keyword>
<proteinExistence type="evidence at protein level"/>
<dbReference type="PIR" id="A04624">
    <property type="entry name" value="HBBAY"/>
</dbReference>
<dbReference type="SMR" id="P02030"/>
<dbReference type="GO" id="GO:0072562">
    <property type="term" value="C:blood microparticle"/>
    <property type="evidence" value="ECO:0007669"/>
    <property type="project" value="TreeGrafter"/>
</dbReference>
<dbReference type="GO" id="GO:0031838">
    <property type="term" value="C:haptoglobin-hemoglobin complex"/>
    <property type="evidence" value="ECO:0007669"/>
    <property type="project" value="TreeGrafter"/>
</dbReference>
<dbReference type="GO" id="GO:0005833">
    <property type="term" value="C:hemoglobin complex"/>
    <property type="evidence" value="ECO:0007669"/>
    <property type="project" value="InterPro"/>
</dbReference>
<dbReference type="GO" id="GO:0031720">
    <property type="term" value="F:haptoglobin binding"/>
    <property type="evidence" value="ECO:0007669"/>
    <property type="project" value="TreeGrafter"/>
</dbReference>
<dbReference type="GO" id="GO:0020037">
    <property type="term" value="F:heme binding"/>
    <property type="evidence" value="ECO:0007669"/>
    <property type="project" value="InterPro"/>
</dbReference>
<dbReference type="GO" id="GO:0031721">
    <property type="term" value="F:hemoglobin alpha binding"/>
    <property type="evidence" value="ECO:0007669"/>
    <property type="project" value="TreeGrafter"/>
</dbReference>
<dbReference type="GO" id="GO:0046872">
    <property type="term" value="F:metal ion binding"/>
    <property type="evidence" value="ECO:0007669"/>
    <property type="project" value="UniProtKB-KW"/>
</dbReference>
<dbReference type="GO" id="GO:0043177">
    <property type="term" value="F:organic acid binding"/>
    <property type="evidence" value="ECO:0007669"/>
    <property type="project" value="TreeGrafter"/>
</dbReference>
<dbReference type="GO" id="GO:0019825">
    <property type="term" value="F:oxygen binding"/>
    <property type="evidence" value="ECO:0007669"/>
    <property type="project" value="InterPro"/>
</dbReference>
<dbReference type="GO" id="GO:0005344">
    <property type="term" value="F:oxygen carrier activity"/>
    <property type="evidence" value="ECO:0007669"/>
    <property type="project" value="UniProtKB-KW"/>
</dbReference>
<dbReference type="GO" id="GO:0004601">
    <property type="term" value="F:peroxidase activity"/>
    <property type="evidence" value="ECO:0007669"/>
    <property type="project" value="TreeGrafter"/>
</dbReference>
<dbReference type="GO" id="GO:0042744">
    <property type="term" value="P:hydrogen peroxide catabolic process"/>
    <property type="evidence" value="ECO:0007669"/>
    <property type="project" value="TreeGrafter"/>
</dbReference>
<dbReference type="CDD" id="cd08925">
    <property type="entry name" value="Hb-beta-like"/>
    <property type="match status" value="1"/>
</dbReference>
<dbReference type="FunFam" id="1.10.490.10:FF:000001">
    <property type="entry name" value="Hemoglobin subunit beta"/>
    <property type="match status" value="1"/>
</dbReference>
<dbReference type="Gene3D" id="1.10.490.10">
    <property type="entry name" value="Globins"/>
    <property type="match status" value="1"/>
</dbReference>
<dbReference type="InterPro" id="IPR000971">
    <property type="entry name" value="Globin"/>
</dbReference>
<dbReference type="InterPro" id="IPR009050">
    <property type="entry name" value="Globin-like_sf"/>
</dbReference>
<dbReference type="InterPro" id="IPR012292">
    <property type="entry name" value="Globin/Proto"/>
</dbReference>
<dbReference type="InterPro" id="IPR002337">
    <property type="entry name" value="Hemoglobin_b"/>
</dbReference>
<dbReference type="InterPro" id="IPR050056">
    <property type="entry name" value="Hemoglobin_oxygen_transport"/>
</dbReference>
<dbReference type="PANTHER" id="PTHR11442">
    <property type="entry name" value="HEMOGLOBIN FAMILY MEMBER"/>
    <property type="match status" value="1"/>
</dbReference>
<dbReference type="PANTHER" id="PTHR11442:SF42">
    <property type="entry name" value="HEMOGLOBIN SUBUNIT BETA"/>
    <property type="match status" value="1"/>
</dbReference>
<dbReference type="Pfam" id="PF00042">
    <property type="entry name" value="Globin"/>
    <property type="match status" value="1"/>
</dbReference>
<dbReference type="PRINTS" id="PR00814">
    <property type="entry name" value="BETAHAEM"/>
</dbReference>
<dbReference type="SUPFAM" id="SSF46458">
    <property type="entry name" value="Globin-like"/>
    <property type="match status" value="1"/>
</dbReference>
<dbReference type="PROSITE" id="PS01033">
    <property type="entry name" value="GLOBIN"/>
    <property type="match status" value="1"/>
</dbReference>
<protein>
    <recommendedName>
        <fullName>Hemoglobin subunit beta</fullName>
    </recommendedName>
    <alternativeName>
        <fullName>Beta-globin</fullName>
    </alternativeName>
    <alternativeName>
        <fullName>Hemoglobin beta chain</fullName>
    </alternativeName>
</protein>
<accession>P02030</accession>
<comment type="function">
    <text>Involved in oxygen transport from the lung to the various peripheral tissues.</text>
</comment>
<comment type="subunit">
    <text>Heterotetramer of two alpha chains and two beta chains.</text>
</comment>
<comment type="tissue specificity">
    <text>Red blood cells.</text>
</comment>
<comment type="similarity">
    <text evidence="3">Belongs to the globin family.</text>
</comment>
<reference key="1">
    <citation type="journal article" date="1980" name="Hemoglobin">
        <title>Complete primary structure of the beta chain from the hemoglobin of a baboon, Papio cynocephalus.</title>
        <authorList>
            <person name="Nute P.E."/>
            <person name="Mahoney W.C."/>
        </authorList>
    </citation>
    <scope>PROTEIN SEQUENCE</scope>
</reference>
<evidence type="ECO:0000250" key="1">
    <source>
        <dbReference type="UniProtKB" id="P02086"/>
    </source>
</evidence>
<evidence type="ECO:0000250" key="2">
    <source>
        <dbReference type="UniProtKB" id="P68871"/>
    </source>
</evidence>
<evidence type="ECO:0000255" key="3">
    <source>
        <dbReference type="PROSITE-ProRule" id="PRU00238"/>
    </source>
</evidence>
<feature type="chain" id="PRO_0000053064" description="Hemoglobin subunit beta">
    <location>
        <begin position="1"/>
        <end position="146"/>
    </location>
</feature>
<feature type="domain" description="Globin" evidence="3">
    <location>
        <begin position="2"/>
        <end position="146"/>
    </location>
</feature>
<feature type="binding site" description="distal binding residue">
    <location>
        <position position="63"/>
    </location>
    <ligand>
        <name>heme b</name>
        <dbReference type="ChEBI" id="CHEBI:60344"/>
    </ligand>
    <ligandPart>
        <name>Fe</name>
        <dbReference type="ChEBI" id="CHEBI:18248"/>
    </ligandPart>
</feature>
<feature type="binding site" description="proximal binding residue">
    <location>
        <position position="92"/>
    </location>
    <ligand>
        <name>heme b</name>
        <dbReference type="ChEBI" id="CHEBI:60344"/>
    </ligand>
    <ligandPart>
        <name>Fe</name>
        <dbReference type="ChEBI" id="CHEBI:18248"/>
    </ligandPart>
</feature>
<feature type="modified residue" description="N-acetylvaline" evidence="1">
    <location>
        <position position="1"/>
    </location>
</feature>
<feature type="modified residue" description="Phosphothreonine" evidence="2">
    <location>
        <position position="12"/>
    </location>
</feature>
<feature type="modified residue" description="Phosphoserine" evidence="2">
    <location>
        <position position="44"/>
    </location>
</feature>
<feature type="modified residue" description="N6-acetyllysine" evidence="2">
    <location>
        <position position="59"/>
    </location>
</feature>
<feature type="modified residue" description="N6-acetyllysine" evidence="2">
    <location>
        <position position="82"/>
    </location>
</feature>
<feature type="modified residue" description="S-nitrosocysteine" evidence="2">
    <location>
        <position position="93"/>
    </location>
</feature>
<feature type="modified residue" description="N6-acetyllysine" evidence="2">
    <location>
        <position position="144"/>
    </location>
</feature>